<proteinExistence type="evidence at protein level"/>
<protein>
    <recommendedName>
        <fullName evidence="4">Large ribosomal subunit protein eL18B</fullName>
    </recommendedName>
    <alternativeName>
        <fullName>60S ribosomal protein L18-B</fullName>
    </alternativeName>
</protein>
<gene>
    <name type="primary">rpl1802</name>
    <name type="synonym">rpl18b</name>
    <name type="ORF">SPAPB17E12.13</name>
</gene>
<accession>Q8TFH1</accession>
<keyword id="KW-0002">3D-structure</keyword>
<keyword id="KW-0963">Cytoplasm</keyword>
<keyword id="KW-0597">Phosphoprotein</keyword>
<keyword id="KW-1185">Reference proteome</keyword>
<keyword id="KW-0687">Ribonucleoprotein</keyword>
<keyword id="KW-0689">Ribosomal protein</keyword>
<comment type="function">
    <text evidence="1">Component of the ribosome, a large ribonucleoprotein complex responsible for the synthesis of proteins in the cell. The small ribosomal subunit (SSU) binds messenger RNAs (mRNAs) and translates the encoded message by selecting cognate aminoacyl-transfer RNA (tRNA) molecules. The large subunit (LSU) contains the ribosomal catalytic site termed the peptidyl transferase center (PTC), which catalyzes the formation of peptide bonds, thereby polymerizing the amino acids delivered by tRNAs into a polypeptide chain. The nascent polypeptides leave the ribosome through a tunnel in the LSU and interact with protein factors that function in enzymatic processing, targeting, and the membrane insertion of nascent chains at the exit of the ribosomal tunnel.</text>
</comment>
<comment type="subunit">
    <text evidence="1">Component of the large ribosomal subunit (LSU). Mature yeast ribosomes consist of a small (40S) and a large (60S) subunit. The 40S small subunit contains 1 molecule of ribosomal RNA (18S rRNA) and at least 33 different proteins. The large 60S subunit contains 3 rRNA molecules (25S, 5.8S and 5S rRNA) and at least 46 different proteins. eL18 interacts with NAP1.</text>
</comment>
<comment type="subcellular location">
    <subcellularLocation>
        <location evidence="2">Cytoplasm</location>
    </subcellularLocation>
</comment>
<comment type="miscellaneous">
    <text>There are 2 genes for eL18 in S.pombe.</text>
</comment>
<comment type="similarity">
    <text evidence="4">Belongs to the eukaryotic ribosomal protein eL18 family.</text>
</comment>
<sequence>MGIDIERHHVRKSQRSKPASENVYLKLLVKLYRFLARRTDSRFNKAILKRLFQSKTNRPPISISKIAALTSRKSASLEGKTTVIVGTVTDDERLLTVPKLSVAALRFTKSARARILKAGGEVLTLDQLALRAPTGSNTVLLRGKKHAREAYRHFGFGPHKHKAPYVRSEGRKFERARGRRKSRAFKV</sequence>
<organism>
    <name type="scientific">Schizosaccharomyces pombe (strain 972 / ATCC 24843)</name>
    <name type="common">Fission yeast</name>
    <dbReference type="NCBI Taxonomy" id="284812"/>
    <lineage>
        <taxon>Eukaryota</taxon>
        <taxon>Fungi</taxon>
        <taxon>Dikarya</taxon>
        <taxon>Ascomycota</taxon>
        <taxon>Taphrinomycotina</taxon>
        <taxon>Schizosaccharomycetes</taxon>
        <taxon>Schizosaccharomycetales</taxon>
        <taxon>Schizosaccharomycetaceae</taxon>
        <taxon>Schizosaccharomyces</taxon>
    </lineage>
</organism>
<feature type="chain" id="PRO_0000132783" description="Large ribosomal subunit protein eL18B">
    <location>
        <begin position="1"/>
        <end position="187"/>
    </location>
</feature>
<feature type="modified residue" description="Phosphothreonine" evidence="3">
    <location>
        <position position="134"/>
    </location>
</feature>
<feature type="modified residue" description="Phosphoserine" evidence="3">
    <location>
        <position position="136"/>
    </location>
</feature>
<name>RL18B_SCHPO</name>
<dbReference type="EMBL" id="CU329670">
    <property type="protein sequence ID" value="CAD27506.1"/>
    <property type="molecule type" value="Genomic_DNA"/>
</dbReference>
<dbReference type="RefSeq" id="NP_001018228.1">
    <property type="nucleotide sequence ID" value="NM_001018708.2"/>
</dbReference>
<dbReference type="PDB" id="9AXT">
    <property type="method" value="EM"/>
    <property type="resolution" value="2.40 A"/>
    <property type="chains" value="Bc=1-187"/>
</dbReference>
<dbReference type="PDB" id="9AXU">
    <property type="method" value="EM"/>
    <property type="resolution" value="1.94 A"/>
    <property type="chains" value="c=1-187"/>
</dbReference>
<dbReference type="PDB" id="9AXV">
    <property type="method" value="EM"/>
    <property type="resolution" value="2.40 A"/>
    <property type="chains" value="Bc=1-187"/>
</dbReference>
<dbReference type="PDBsum" id="9AXT"/>
<dbReference type="PDBsum" id="9AXU"/>
<dbReference type="PDBsum" id="9AXV"/>
<dbReference type="EMDB" id="EMD-43972"/>
<dbReference type="EMDB" id="EMD-43973"/>
<dbReference type="EMDB" id="EMD-43976"/>
<dbReference type="SMR" id="Q8TFH1"/>
<dbReference type="BioGRID" id="280453">
    <property type="interactions" value="9"/>
</dbReference>
<dbReference type="FunCoup" id="Q8TFH1">
    <property type="interactions" value="581"/>
</dbReference>
<dbReference type="IntAct" id="Q8TFH1">
    <property type="interactions" value="1"/>
</dbReference>
<dbReference type="STRING" id="284812.Q8TFH1"/>
<dbReference type="iPTMnet" id="Q8TFH1"/>
<dbReference type="PaxDb" id="4896-SPAPB17E12.13.1"/>
<dbReference type="EnsemblFungi" id="SPAPB17E12.13.1">
    <property type="protein sequence ID" value="SPAPB17E12.13.1:pep"/>
    <property type="gene ID" value="SPAPB17E12.13"/>
</dbReference>
<dbReference type="GeneID" id="3361377"/>
<dbReference type="KEGG" id="spo:3361377"/>
<dbReference type="PomBase" id="SPAPB17E12.13">
    <property type="gene designation" value="rpl1802"/>
</dbReference>
<dbReference type="VEuPathDB" id="FungiDB:SPAPB17E12.13"/>
<dbReference type="eggNOG" id="KOG1714">
    <property type="taxonomic scope" value="Eukaryota"/>
</dbReference>
<dbReference type="HOGENOM" id="CLU_080024_0_1_1"/>
<dbReference type="InParanoid" id="Q8TFH1"/>
<dbReference type="OMA" id="IDICHKN"/>
<dbReference type="PhylomeDB" id="Q8TFH1"/>
<dbReference type="Reactome" id="R-SPO-156827">
    <property type="pathway name" value="L13a-mediated translational silencing of Ceruloplasmin expression"/>
</dbReference>
<dbReference type="Reactome" id="R-SPO-1799339">
    <property type="pathway name" value="SRP-dependent cotranslational protein targeting to membrane"/>
</dbReference>
<dbReference type="Reactome" id="R-SPO-72689">
    <property type="pathway name" value="Formation of a pool of free 40S subunits"/>
</dbReference>
<dbReference type="Reactome" id="R-SPO-72706">
    <property type="pathway name" value="GTP hydrolysis and joining of the 60S ribosomal subunit"/>
</dbReference>
<dbReference type="Reactome" id="R-SPO-975956">
    <property type="pathway name" value="Nonsense Mediated Decay (NMD) independent of the Exon Junction Complex (EJC)"/>
</dbReference>
<dbReference type="Reactome" id="R-SPO-975957">
    <property type="pathway name" value="Nonsense Mediated Decay (NMD) enhanced by the Exon Junction Complex (EJC)"/>
</dbReference>
<dbReference type="PRO" id="PR:Q8TFH1"/>
<dbReference type="Proteomes" id="UP000002485">
    <property type="component" value="Chromosome I"/>
</dbReference>
<dbReference type="GO" id="GO:0005829">
    <property type="term" value="C:cytosol"/>
    <property type="evidence" value="ECO:0007005"/>
    <property type="project" value="PomBase"/>
</dbReference>
<dbReference type="GO" id="GO:0022625">
    <property type="term" value="C:cytosolic large ribosomal subunit"/>
    <property type="evidence" value="ECO:0000269"/>
    <property type="project" value="PomBase"/>
</dbReference>
<dbReference type="GO" id="GO:0030684">
    <property type="term" value="C:preribosome"/>
    <property type="evidence" value="ECO:0000314"/>
    <property type="project" value="PomBase"/>
</dbReference>
<dbReference type="GO" id="GO:0003723">
    <property type="term" value="F:RNA binding"/>
    <property type="evidence" value="ECO:0000318"/>
    <property type="project" value="GO_Central"/>
</dbReference>
<dbReference type="GO" id="GO:0003735">
    <property type="term" value="F:structural constituent of ribosome"/>
    <property type="evidence" value="ECO:0000318"/>
    <property type="project" value="GO_Central"/>
</dbReference>
<dbReference type="GO" id="GO:0002181">
    <property type="term" value="P:cytoplasmic translation"/>
    <property type="evidence" value="ECO:0000266"/>
    <property type="project" value="PomBase"/>
</dbReference>
<dbReference type="FunFam" id="3.100.10.10:FF:000001">
    <property type="entry name" value="60S ribosomal protein L18"/>
    <property type="match status" value="1"/>
</dbReference>
<dbReference type="Gene3D" id="3.100.10.10">
    <property type="match status" value="1"/>
</dbReference>
<dbReference type="InterPro" id="IPR000039">
    <property type="entry name" value="Ribosomal_eL18"/>
</dbReference>
<dbReference type="InterPro" id="IPR021132">
    <property type="entry name" value="Ribosomal_eL18/eL18-A/B/_CS"/>
</dbReference>
<dbReference type="InterPro" id="IPR021131">
    <property type="entry name" value="Ribosomal_uL15/eL18"/>
</dbReference>
<dbReference type="InterPro" id="IPR036227">
    <property type="entry name" value="Ribosomal_uL15/eL18_sf"/>
</dbReference>
<dbReference type="PANTHER" id="PTHR10934">
    <property type="entry name" value="60S RIBOSOMAL PROTEIN L18"/>
    <property type="match status" value="1"/>
</dbReference>
<dbReference type="PANTHER" id="PTHR10934:SF2">
    <property type="entry name" value="LARGE RIBOSOMAL SUBUNIT PROTEIN EL18"/>
    <property type="match status" value="1"/>
</dbReference>
<dbReference type="Pfam" id="PF17135">
    <property type="entry name" value="Ribosomal_L18"/>
    <property type="match status" value="1"/>
</dbReference>
<dbReference type="SUPFAM" id="SSF52080">
    <property type="entry name" value="Ribosomal proteins L15p and L18e"/>
    <property type="match status" value="1"/>
</dbReference>
<dbReference type="PROSITE" id="PS01106">
    <property type="entry name" value="RIBOSOMAL_L18E"/>
    <property type="match status" value="1"/>
</dbReference>
<evidence type="ECO:0000250" key="1">
    <source>
        <dbReference type="UniProtKB" id="P0CX50"/>
    </source>
</evidence>
<evidence type="ECO:0000269" key="2">
    <source>
    </source>
</evidence>
<evidence type="ECO:0000269" key="3">
    <source>
    </source>
</evidence>
<evidence type="ECO:0000305" key="4"/>
<reference key="1">
    <citation type="journal article" date="2002" name="Nature">
        <title>The genome sequence of Schizosaccharomyces pombe.</title>
        <authorList>
            <person name="Wood V."/>
            <person name="Gwilliam R."/>
            <person name="Rajandream M.A."/>
            <person name="Lyne M.H."/>
            <person name="Lyne R."/>
            <person name="Stewart A."/>
            <person name="Sgouros J.G."/>
            <person name="Peat N."/>
            <person name="Hayles J."/>
            <person name="Baker S.G."/>
            <person name="Basham D."/>
            <person name="Bowman S."/>
            <person name="Brooks K."/>
            <person name="Brown D."/>
            <person name="Brown S."/>
            <person name="Chillingworth T."/>
            <person name="Churcher C.M."/>
            <person name="Collins M."/>
            <person name="Connor R."/>
            <person name="Cronin A."/>
            <person name="Davis P."/>
            <person name="Feltwell T."/>
            <person name="Fraser A."/>
            <person name="Gentles S."/>
            <person name="Goble A."/>
            <person name="Hamlin N."/>
            <person name="Harris D.E."/>
            <person name="Hidalgo J."/>
            <person name="Hodgson G."/>
            <person name="Holroyd S."/>
            <person name="Hornsby T."/>
            <person name="Howarth S."/>
            <person name="Huckle E.J."/>
            <person name="Hunt S."/>
            <person name="Jagels K."/>
            <person name="James K.D."/>
            <person name="Jones L."/>
            <person name="Jones M."/>
            <person name="Leather S."/>
            <person name="McDonald S."/>
            <person name="McLean J."/>
            <person name="Mooney P."/>
            <person name="Moule S."/>
            <person name="Mungall K.L."/>
            <person name="Murphy L.D."/>
            <person name="Niblett D."/>
            <person name="Odell C."/>
            <person name="Oliver K."/>
            <person name="O'Neil S."/>
            <person name="Pearson D."/>
            <person name="Quail M.A."/>
            <person name="Rabbinowitsch E."/>
            <person name="Rutherford K.M."/>
            <person name="Rutter S."/>
            <person name="Saunders D."/>
            <person name="Seeger K."/>
            <person name="Sharp S."/>
            <person name="Skelton J."/>
            <person name="Simmonds M.N."/>
            <person name="Squares R."/>
            <person name="Squares S."/>
            <person name="Stevens K."/>
            <person name="Taylor K."/>
            <person name="Taylor R.G."/>
            <person name="Tivey A."/>
            <person name="Walsh S.V."/>
            <person name="Warren T."/>
            <person name="Whitehead S."/>
            <person name="Woodward J.R."/>
            <person name="Volckaert G."/>
            <person name="Aert R."/>
            <person name="Robben J."/>
            <person name="Grymonprez B."/>
            <person name="Weltjens I."/>
            <person name="Vanstreels E."/>
            <person name="Rieger M."/>
            <person name="Schaefer M."/>
            <person name="Mueller-Auer S."/>
            <person name="Gabel C."/>
            <person name="Fuchs M."/>
            <person name="Duesterhoeft A."/>
            <person name="Fritzc C."/>
            <person name="Holzer E."/>
            <person name="Moestl D."/>
            <person name="Hilbert H."/>
            <person name="Borzym K."/>
            <person name="Langer I."/>
            <person name="Beck A."/>
            <person name="Lehrach H."/>
            <person name="Reinhardt R."/>
            <person name="Pohl T.M."/>
            <person name="Eger P."/>
            <person name="Zimmermann W."/>
            <person name="Wedler H."/>
            <person name="Wambutt R."/>
            <person name="Purnelle B."/>
            <person name="Goffeau A."/>
            <person name="Cadieu E."/>
            <person name="Dreano S."/>
            <person name="Gloux S."/>
            <person name="Lelaure V."/>
            <person name="Mottier S."/>
            <person name="Galibert F."/>
            <person name="Aves S.J."/>
            <person name="Xiang Z."/>
            <person name="Hunt C."/>
            <person name="Moore K."/>
            <person name="Hurst S.M."/>
            <person name="Lucas M."/>
            <person name="Rochet M."/>
            <person name="Gaillardin C."/>
            <person name="Tallada V.A."/>
            <person name="Garzon A."/>
            <person name="Thode G."/>
            <person name="Daga R.R."/>
            <person name="Cruzado L."/>
            <person name="Jimenez J."/>
            <person name="Sanchez M."/>
            <person name="del Rey F."/>
            <person name="Benito J."/>
            <person name="Dominguez A."/>
            <person name="Revuelta J.L."/>
            <person name="Moreno S."/>
            <person name="Armstrong J."/>
            <person name="Forsburg S.L."/>
            <person name="Cerutti L."/>
            <person name="Lowe T."/>
            <person name="McCombie W.R."/>
            <person name="Paulsen I."/>
            <person name="Potashkin J."/>
            <person name="Shpakovski G.V."/>
            <person name="Ussery D."/>
            <person name="Barrell B.G."/>
            <person name="Nurse P."/>
        </authorList>
    </citation>
    <scope>NUCLEOTIDE SEQUENCE [LARGE SCALE GENOMIC DNA]</scope>
    <source>
        <strain>972 / ATCC 24843</strain>
    </source>
</reference>
<reference key="2">
    <citation type="journal article" date="2006" name="Nat. Biotechnol.">
        <title>ORFeome cloning and global analysis of protein localization in the fission yeast Schizosaccharomyces pombe.</title>
        <authorList>
            <person name="Matsuyama A."/>
            <person name="Arai R."/>
            <person name="Yashiroda Y."/>
            <person name="Shirai A."/>
            <person name="Kamata A."/>
            <person name="Sekido S."/>
            <person name="Kobayashi Y."/>
            <person name="Hashimoto A."/>
            <person name="Hamamoto M."/>
            <person name="Hiraoka Y."/>
            <person name="Horinouchi S."/>
            <person name="Yoshida M."/>
        </authorList>
    </citation>
    <scope>SUBCELLULAR LOCATION [LARGE SCALE ANALYSIS]</scope>
</reference>
<reference key="3">
    <citation type="journal article" date="2008" name="J. Proteome Res.">
        <title>Phosphoproteome analysis of fission yeast.</title>
        <authorList>
            <person name="Wilson-Grady J.T."/>
            <person name="Villen J."/>
            <person name="Gygi S.P."/>
        </authorList>
    </citation>
    <scope>PHOSPHORYLATION [LARGE SCALE ANALYSIS] AT THR-134 AND SER-136</scope>
    <scope>IDENTIFICATION BY MASS SPECTROMETRY</scope>
</reference>